<evidence type="ECO:0000250" key="1"/>
<evidence type="ECO:0000250" key="2">
    <source>
        <dbReference type="UniProtKB" id="P00157"/>
    </source>
</evidence>
<evidence type="ECO:0000255" key="3">
    <source>
        <dbReference type="PROSITE-ProRule" id="PRU00967"/>
    </source>
</evidence>
<evidence type="ECO:0000255" key="4">
    <source>
        <dbReference type="PROSITE-ProRule" id="PRU00968"/>
    </source>
</evidence>
<geneLocation type="mitochondrion"/>
<name>CYB_SPHVA</name>
<feature type="chain" id="PRO_0000061609" description="Cytochrome b">
    <location>
        <begin position="1"/>
        <end position="380"/>
    </location>
</feature>
<feature type="transmembrane region" description="Helical" evidence="2">
    <location>
        <begin position="34"/>
        <end position="54"/>
    </location>
</feature>
<feature type="transmembrane region" description="Helical" evidence="2">
    <location>
        <begin position="78"/>
        <end position="99"/>
    </location>
</feature>
<feature type="transmembrane region" description="Helical" evidence="2">
    <location>
        <begin position="114"/>
        <end position="134"/>
    </location>
</feature>
<feature type="transmembrane region" description="Helical" evidence="2">
    <location>
        <begin position="179"/>
        <end position="199"/>
    </location>
</feature>
<feature type="transmembrane region" description="Helical" evidence="2">
    <location>
        <begin position="227"/>
        <end position="247"/>
    </location>
</feature>
<feature type="transmembrane region" description="Helical" evidence="2">
    <location>
        <begin position="289"/>
        <end position="309"/>
    </location>
</feature>
<feature type="transmembrane region" description="Helical" evidence="2">
    <location>
        <begin position="321"/>
        <end position="341"/>
    </location>
</feature>
<feature type="transmembrane region" description="Helical" evidence="2">
    <location>
        <begin position="348"/>
        <end position="368"/>
    </location>
</feature>
<feature type="binding site" description="axial binding residue" evidence="2">
    <location>
        <position position="84"/>
    </location>
    <ligand>
        <name>heme b</name>
        <dbReference type="ChEBI" id="CHEBI:60344"/>
        <label>b562</label>
    </ligand>
    <ligandPart>
        <name>Fe</name>
        <dbReference type="ChEBI" id="CHEBI:18248"/>
    </ligandPart>
</feature>
<feature type="binding site" description="axial binding residue" evidence="2">
    <location>
        <position position="98"/>
    </location>
    <ligand>
        <name>heme b</name>
        <dbReference type="ChEBI" id="CHEBI:60344"/>
        <label>b566</label>
    </ligand>
    <ligandPart>
        <name>Fe</name>
        <dbReference type="ChEBI" id="CHEBI:18248"/>
    </ligandPart>
</feature>
<feature type="binding site" description="axial binding residue" evidence="2">
    <location>
        <position position="183"/>
    </location>
    <ligand>
        <name>heme b</name>
        <dbReference type="ChEBI" id="CHEBI:60344"/>
        <label>b562</label>
    </ligand>
    <ligandPart>
        <name>Fe</name>
        <dbReference type="ChEBI" id="CHEBI:18248"/>
    </ligandPart>
</feature>
<feature type="binding site" description="axial binding residue" evidence="2">
    <location>
        <position position="197"/>
    </location>
    <ligand>
        <name>heme b</name>
        <dbReference type="ChEBI" id="CHEBI:60344"/>
        <label>b566</label>
    </ligand>
    <ligandPart>
        <name>Fe</name>
        <dbReference type="ChEBI" id="CHEBI:18248"/>
    </ligandPart>
</feature>
<feature type="binding site" evidence="2">
    <location>
        <position position="202"/>
    </location>
    <ligand>
        <name>a ubiquinone</name>
        <dbReference type="ChEBI" id="CHEBI:16389"/>
    </ligand>
</feature>
<proteinExistence type="inferred from homology"/>
<dbReference type="EMBL" id="U89193">
    <property type="protein sequence ID" value="AAD00688.1"/>
    <property type="molecule type" value="Genomic_DNA"/>
</dbReference>
<dbReference type="EMBL" id="AF082045">
    <property type="protein sequence ID" value="AAC34839.1"/>
    <property type="molecule type" value="Genomic_DNA"/>
</dbReference>
<dbReference type="SMR" id="O79274"/>
<dbReference type="GO" id="GO:0005743">
    <property type="term" value="C:mitochondrial inner membrane"/>
    <property type="evidence" value="ECO:0007669"/>
    <property type="project" value="UniProtKB-SubCell"/>
</dbReference>
<dbReference type="GO" id="GO:0045275">
    <property type="term" value="C:respiratory chain complex III"/>
    <property type="evidence" value="ECO:0007669"/>
    <property type="project" value="InterPro"/>
</dbReference>
<dbReference type="GO" id="GO:0046872">
    <property type="term" value="F:metal ion binding"/>
    <property type="evidence" value="ECO:0007669"/>
    <property type="project" value="UniProtKB-KW"/>
</dbReference>
<dbReference type="GO" id="GO:0008121">
    <property type="term" value="F:ubiquinol-cytochrome-c reductase activity"/>
    <property type="evidence" value="ECO:0007669"/>
    <property type="project" value="InterPro"/>
</dbReference>
<dbReference type="GO" id="GO:0006122">
    <property type="term" value="P:mitochondrial electron transport, ubiquinol to cytochrome c"/>
    <property type="evidence" value="ECO:0007669"/>
    <property type="project" value="TreeGrafter"/>
</dbReference>
<dbReference type="CDD" id="cd00290">
    <property type="entry name" value="cytochrome_b_C"/>
    <property type="match status" value="1"/>
</dbReference>
<dbReference type="CDD" id="cd00284">
    <property type="entry name" value="Cytochrome_b_N"/>
    <property type="match status" value="1"/>
</dbReference>
<dbReference type="FunFam" id="1.20.810.10:FF:000002">
    <property type="entry name" value="Cytochrome b"/>
    <property type="match status" value="1"/>
</dbReference>
<dbReference type="Gene3D" id="1.20.810.10">
    <property type="entry name" value="Cytochrome Bc1 Complex, Chain C"/>
    <property type="match status" value="1"/>
</dbReference>
<dbReference type="InterPro" id="IPR005798">
    <property type="entry name" value="Cyt_b/b6_C"/>
</dbReference>
<dbReference type="InterPro" id="IPR036150">
    <property type="entry name" value="Cyt_b/b6_C_sf"/>
</dbReference>
<dbReference type="InterPro" id="IPR005797">
    <property type="entry name" value="Cyt_b/b6_N"/>
</dbReference>
<dbReference type="InterPro" id="IPR027387">
    <property type="entry name" value="Cytb/b6-like_sf"/>
</dbReference>
<dbReference type="InterPro" id="IPR030689">
    <property type="entry name" value="Cytochrome_b"/>
</dbReference>
<dbReference type="InterPro" id="IPR048260">
    <property type="entry name" value="Cytochrome_b_C_euk/bac"/>
</dbReference>
<dbReference type="InterPro" id="IPR048259">
    <property type="entry name" value="Cytochrome_b_N_euk/bac"/>
</dbReference>
<dbReference type="InterPro" id="IPR016174">
    <property type="entry name" value="Di-haem_cyt_TM"/>
</dbReference>
<dbReference type="PANTHER" id="PTHR19271">
    <property type="entry name" value="CYTOCHROME B"/>
    <property type="match status" value="1"/>
</dbReference>
<dbReference type="PANTHER" id="PTHR19271:SF16">
    <property type="entry name" value="CYTOCHROME B"/>
    <property type="match status" value="1"/>
</dbReference>
<dbReference type="Pfam" id="PF00032">
    <property type="entry name" value="Cytochrom_B_C"/>
    <property type="match status" value="1"/>
</dbReference>
<dbReference type="Pfam" id="PF00033">
    <property type="entry name" value="Cytochrome_B"/>
    <property type="match status" value="1"/>
</dbReference>
<dbReference type="PIRSF" id="PIRSF038885">
    <property type="entry name" value="COB"/>
    <property type="match status" value="1"/>
</dbReference>
<dbReference type="SUPFAM" id="SSF81648">
    <property type="entry name" value="a domain/subunit of cytochrome bc1 complex (Ubiquinol-cytochrome c reductase)"/>
    <property type="match status" value="1"/>
</dbReference>
<dbReference type="SUPFAM" id="SSF81342">
    <property type="entry name" value="Transmembrane di-heme cytochromes"/>
    <property type="match status" value="1"/>
</dbReference>
<dbReference type="PROSITE" id="PS51003">
    <property type="entry name" value="CYTB_CTER"/>
    <property type="match status" value="1"/>
</dbReference>
<dbReference type="PROSITE" id="PS51002">
    <property type="entry name" value="CYTB_NTER"/>
    <property type="match status" value="1"/>
</dbReference>
<organism>
    <name type="scientific">Sphyrapicus varius</name>
    <name type="common">Yellow-bellied sapsucker</name>
    <name type="synonym">Picus varius</name>
    <dbReference type="NCBI Taxonomy" id="56079"/>
    <lineage>
        <taxon>Eukaryota</taxon>
        <taxon>Metazoa</taxon>
        <taxon>Chordata</taxon>
        <taxon>Craniata</taxon>
        <taxon>Vertebrata</taxon>
        <taxon>Euteleostomi</taxon>
        <taxon>Archelosauria</taxon>
        <taxon>Archosauria</taxon>
        <taxon>Dinosauria</taxon>
        <taxon>Saurischia</taxon>
        <taxon>Theropoda</taxon>
        <taxon>Coelurosauria</taxon>
        <taxon>Aves</taxon>
        <taxon>Neognathae</taxon>
        <taxon>Neoaves</taxon>
        <taxon>Telluraves</taxon>
        <taxon>Coraciimorphae</taxon>
        <taxon>Piciformes</taxon>
        <taxon>Picidae</taxon>
        <taxon>Sphyrapicus</taxon>
    </lineage>
</organism>
<accession>O79274</accession>
<sequence>MAPNLRKSHPILKMINNSLIDLPAPSNISAWWNFGSLLGICLLTQIITGLLLATHYTADTTLAFSSVAHTCRNVQYGWLIRNLHANGASFFFICIYLHIGRGFYYGSYLFKETWNTGVILLLTLMATAFVGYVLPWGQMSFWGATVITNLFSAFPYIGQTIVEWAWGGFSVDNPTLTRFFALHFLLPFMIAGLTLIHFTFLHESGSNNPLGIVSDCDKIPFHPYFSVKDILGFMLMLLPLTALALFSPNLLGDPENFTPANPLVTPPHIKPEWYFLFAYAILRSIPNKLGGVLALAASVLILFLAPLLHVSKQRTMAFRPLSQLLFWTLVANLLILTWVGSQPVEHPFIIIGQLASITYFLTILFLFPLTSALENKLLNF</sequence>
<reference key="1">
    <citation type="journal article" date="2000" name="Mol. Phylogenet. Evol.">
        <title>Higher-level phylogeny of trogoniformes.</title>
        <authorList>
            <person name="Espinosa de los Monteros A."/>
        </authorList>
    </citation>
    <scope>NUCLEOTIDE SEQUENCE [GENOMIC DNA]</scope>
</reference>
<reference key="2">
    <citation type="journal article" date="1998" name="Proc. Natl. Acad. Sci. U.S.A.">
        <title>Multiple independent origins of mitochondrial gene order in birds.</title>
        <authorList>
            <person name="Mindell D.P."/>
            <person name="Sorenson M.D."/>
            <person name="Dimcheff D.E."/>
        </authorList>
    </citation>
    <scope>NUCLEOTIDE SEQUENCE [GENOMIC DNA] OF 274-380</scope>
</reference>
<comment type="function">
    <text evidence="2">Component of the ubiquinol-cytochrome c reductase complex (complex III or cytochrome b-c1 complex) that is part of the mitochondrial respiratory chain. The b-c1 complex mediates electron transfer from ubiquinol to cytochrome c. Contributes to the generation of a proton gradient across the mitochondrial membrane that is then used for ATP synthesis.</text>
</comment>
<comment type="cofactor">
    <cofactor evidence="2">
        <name>heme b</name>
        <dbReference type="ChEBI" id="CHEBI:60344"/>
    </cofactor>
    <text evidence="2">Binds 2 heme b groups non-covalently.</text>
</comment>
<comment type="subunit">
    <text evidence="2">The cytochrome bc1 complex contains 11 subunits: 3 respiratory subunits (MT-CYB, CYC1 and UQCRFS1), 2 core proteins (UQCRC1 and UQCRC2) and 6 low-molecular weight proteins (UQCRH/QCR6, UQCRB/QCR7, UQCRQ/QCR8, UQCR10/QCR9, UQCR11/QCR10 and a cleavage product of UQCRFS1). This cytochrome bc1 complex then forms a dimer.</text>
</comment>
<comment type="subcellular location">
    <subcellularLocation>
        <location evidence="2">Mitochondrion inner membrane</location>
        <topology evidence="2">Multi-pass membrane protein</topology>
    </subcellularLocation>
</comment>
<comment type="miscellaneous">
    <text evidence="1">Heme 1 (or BL or b562) is low-potential and absorbs at about 562 nm, and heme 2 (or BH or b566) is high-potential and absorbs at about 566 nm.</text>
</comment>
<comment type="similarity">
    <text evidence="3 4">Belongs to the cytochrome b family.</text>
</comment>
<comment type="caution">
    <text evidence="2">The full-length protein contains only eight transmembrane helices, not nine as predicted by bioinformatics tools.</text>
</comment>
<keyword id="KW-0249">Electron transport</keyword>
<keyword id="KW-0349">Heme</keyword>
<keyword id="KW-0408">Iron</keyword>
<keyword id="KW-0472">Membrane</keyword>
<keyword id="KW-0479">Metal-binding</keyword>
<keyword id="KW-0496">Mitochondrion</keyword>
<keyword id="KW-0999">Mitochondrion inner membrane</keyword>
<keyword id="KW-0679">Respiratory chain</keyword>
<keyword id="KW-0812">Transmembrane</keyword>
<keyword id="KW-1133">Transmembrane helix</keyword>
<keyword id="KW-0813">Transport</keyword>
<keyword id="KW-0830">Ubiquinone</keyword>
<protein>
    <recommendedName>
        <fullName>Cytochrome b</fullName>
    </recommendedName>
    <alternativeName>
        <fullName>Complex III subunit 3</fullName>
    </alternativeName>
    <alternativeName>
        <fullName>Complex III subunit III</fullName>
    </alternativeName>
    <alternativeName>
        <fullName>Cytochrome b-c1 complex subunit 3</fullName>
    </alternativeName>
    <alternativeName>
        <fullName>Ubiquinol-cytochrome-c reductase complex cytochrome b subunit</fullName>
    </alternativeName>
</protein>
<gene>
    <name type="primary">MT-CYB</name>
    <name type="synonym">COB</name>
    <name type="synonym">CYTB</name>
    <name type="synonym">MTCYB</name>
</gene>